<keyword id="KW-0328">Glycosyltransferase</keyword>
<keyword id="KW-0460">Magnesium</keyword>
<keyword id="KW-0665">Pyrimidine biosynthesis</keyword>
<keyword id="KW-1185">Reference proteome</keyword>
<keyword id="KW-0808">Transferase</keyword>
<dbReference type="EC" id="2.4.2.10" evidence="1"/>
<dbReference type="EMBL" id="CP000304">
    <property type="protein sequence ID" value="ABP78172.1"/>
    <property type="molecule type" value="Genomic_DNA"/>
</dbReference>
<dbReference type="RefSeq" id="WP_011911701.1">
    <property type="nucleotide sequence ID" value="NC_009434.1"/>
</dbReference>
<dbReference type="SMR" id="A4VGS1"/>
<dbReference type="KEGG" id="psa:PST_0466"/>
<dbReference type="eggNOG" id="COG0461">
    <property type="taxonomic scope" value="Bacteria"/>
</dbReference>
<dbReference type="HOGENOM" id="CLU_074878_0_1_6"/>
<dbReference type="UniPathway" id="UPA00070">
    <property type="reaction ID" value="UER00119"/>
</dbReference>
<dbReference type="Proteomes" id="UP000000233">
    <property type="component" value="Chromosome"/>
</dbReference>
<dbReference type="GO" id="GO:0005737">
    <property type="term" value="C:cytoplasm"/>
    <property type="evidence" value="ECO:0007669"/>
    <property type="project" value="TreeGrafter"/>
</dbReference>
<dbReference type="GO" id="GO:0000287">
    <property type="term" value="F:magnesium ion binding"/>
    <property type="evidence" value="ECO:0007669"/>
    <property type="project" value="UniProtKB-UniRule"/>
</dbReference>
<dbReference type="GO" id="GO:0004588">
    <property type="term" value="F:orotate phosphoribosyltransferase activity"/>
    <property type="evidence" value="ECO:0007669"/>
    <property type="project" value="UniProtKB-UniRule"/>
</dbReference>
<dbReference type="GO" id="GO:0006207">
    <property type="term" value="P:'de novo' pyrimidine nucleobase biosynthetic process"/>
    <property type="evidence" value="ECO:0007669"/>
    <property type="project" value="TreeGrafter"/>
</dbReference>
<dbReference type="GO" id="GO:0044205">
    <property type="term" value="P:'de novo' UMP biosynthetic process"/>
    <property type="evidence" value="ECO:0007669"/>
    <property type="project" value="UniProtKB-UniRule"/>
</dbReference>
<dbReference type="GO" id="GO:0046132">
    <property type="term" value="P:pyrimidine ribonucleoside biosynthetic process"/>
    <property type="evidence" value="ECO:0007669"/>
    <property type="project" value="TreeGrafter"/>
</dbReference>
<dbReference type="CDD" id="cd06223">
    <property type="entry name" value="PRTases_typeI"/>
    <property type="match status" value="1"/>
</dbReference>
<dbReference type="FunFam" id="3.40.50.2020:FF:000008">
    <property type="entry name" value="Orotate phosphoribosyltransferase"/>
    <property type="match status" value="1"/>
</dbReference>
<dbReference type="Gene3D" id="3.40.50.2020">
    <property type="match status" value="1"/>
</dbReference>
<dbReference type="HAMAP" id="MF_01208">
    <property type="entry name" value="PyrE"/>
    <property type="match status" value="1"/>
</dbReference>
<dbReference type="InterPro" id="IPR023031">
    <property type="entry name" value="OPRT"/>
</dbReference>
<dbReference type="InterPro" id="IPR004467">
    <property type="entry name" value="Or_phspho_trans_dom"/>
</dbReference>
<dbReference type="InterPro" id="IPR000836">
    <property type="entry name" value="PRibTrfase_dom"/>
</dbReference>
<dbReference type="InterPro" id="IPR029057">
    <property type="entry name" value="PRTase-like"/>
</dbReference>
<dbReference type="NCBIfam" id="TIGR00336">
    <property type="entry name" value="pyrE"/>
    <property type="match status" value="1"/>
</dbReference>
<dbReference type="PANTHER" id="PTHR46683">
    <property type="entry name" value="OROTATE PHOSPHORIBOSYLTRANSFERASE 1-RELATED"/>
    <property type="match status" value="1"/>
</dbReference>
<dbReference type="PANTHER" id="PTHR46683:SF1">
    <property type="entry name" value="OROTATE PHOSPHORIBOSYLTRANSFERASE 1-RELATED"/>
    <property type="match status" value="1"/>
</dbReference>
<dbReference type="Pfam" id="PF00156">
    <property type="entry name" value="Pribosyltran"/>
    <property type="match status" value="1"/>
</dbReference>
<dbReference type="SUPFAM" id="SSF53271">
    <property type="entry name" value="PRTase-like"/>
    <property type="match status" value="1"/>
</dbReference>
<dbReference type="PROSITE" id="PS00103">
    <property type="entry name" value="PUR_PYR_PR_TRANSFER"/>
    <property type="match status" value="1"/>
</dbReference>
<sequence length="215" mass="23650">MQAYQREFIRFAIERGVLRFGEFTLKSGRTSPYFFNAGLFNSGSALAQLGRFYASAVIESGLDFDVIFGPAYKGIPLGAATAIALAEQHQRDLPWCFNRKEAKDHGEGGTLVGAPLTGRVLIVDDVITAGTAIREVMQIIQAQNAEAAGVLIALNRQERGQGEGELSAIQEVERDYRMPVISIVSLEQVLEYLADDVQLKQHLPAVQAYREQYGI</sequence>
<evidence type="ECO:0000255" key="1">
    <source>
        <dbReference type="HAMAP-Rule" id="MF_01208"/>
    </source>
</evidence>
<accession>A4VGS1</accession>
<name>PYRE_STUS1</name>
<reference key="1">
    <citation type="journal article" date="2008" name="Proc. Natl. Acad. Sci. U.S.A.">
        <title>Nitrogen fixation island and rhizosphere competence traits in the genome of root-associated Pseudomonas stutzeri A1501.</title>
        <authorList>
            <person name="Yan Y."/>
            <person name="Yang J."/>
            <person name="Dou Y."/>
            <person name="Chen M."/>
            <person name="Ping S."/>
            <person name="Peng J."/>
            <person name="Lu W."/>
            <person name="Zhang W."/>
            <person name="Yao Z."/>
            <person name="Li H."/>
            <person name="Liu W."/>
            <person name="He S."/>
            <person name="Geng L."/>
            <person name="Zhang X."/>
            <person name="Yang F."/>
            <person name="Yu H."/>
            <person name="Zhan Y."/>
            <person name="Li D."/>
            <person name="Lin Z."/>
            <person name="Wang Y."/>
            <person name="Elmerich C."/>
            <person name="Lin M."/>
            <person name="Jin Q."/>
        </authorList>
    </citation>
    <scope>NUCLEOTIDE SEQUENCE [LARGE SCALE GENOMIC DNA]</scope>
    <source>
        <strain>A1501</strain>
    </source>
</reference>
<comment type="function">
    <text evidence="1">Catalyzes the transfer of a ribosyl phosphate group from 5-phosphoribose 1-diphosphate to orotate, leading to the formation of orotidine monophosphate (OMP).</text>
</comment>
<comment type="catalytic activity">
    <reaction evidence="1">
        <text>orotidine 5'-phosphate + diphosphate = orotate + 5-phospho-alpha-D-ribose 1-diphosphate</text>
        <dbReference type="Rhea" id="RHEA:10380"/>
        <dbReference type="ChEBI" id="CHEBI:30839"/>
        <dbReference type="ChEBI" id="CHEBI:33019"/>
        <dbReference type="ChEBI" id="CHEBI:57538"/>
        <dbReference type="ChEBI" id="CHEBI:58017"/>
        <dbReference type="EC" id="2.4.2.10"/>
    </reaction>
</comment>
<comment type="cofactor">
    <cofactor evidence="1">
        <name>Mg(2+)</name>
        <dbReference type="ChEBI" id="CHEBI:18420"/>
    </cofactor>
</comment>
<comment type="pathway">
    <text evidence="1">Pyrimidine metabolism; UMP biosynthesis via de novo pathway; UMP from orotate: step 1/2.</text>
</comment>
<comment type="subunit">
    <text evidence="1">Homodimer.</text>
</comment>
<comment type="similarity">
    <text evidence="1">Belongs to the purine/pyrimidine phosphoribosyltransferase family. PyrE subfamily.</text>
</comment>
<feature type="chain" id="PRO_1000066279" description="Orotate phosphoribosyltransferase">
    <location>
        <begin position="1"/>
        <end position="215"/>
    </location>
</feature>
<feature type="binding site" description="in other chain" evidence="1">
    <location>
        <position position="26"/>
    </location>
    <ligand>
        <name>5-phospho-alpha-D-ribose 1-diphosphate</name>
        <dbReference type="ChEBI" id="CHEBI:58017"/>
        <note>ligand shared between dimeric partners</note>
    </ligand>
</feature>
<feature type="binding site" evidence="1">
    <location>
        <begin position="34"/>
        <end position="35"/>
    </location>
    <ligand>
        <name>orotate</name>
        <dbReference type="ChEBI" id="CHEBI:30839"/>
    </ligand>
</feature>
<feature type="binding site" description="in other chain" evidence="1">
    <location>
        <begin position="72"/>
        <end position="73"/>
    </location>
    <ligand>
        <name>5-phospho-alpha-D-ribose 1-diphosphate</name>
        <dbReference type="ChEBI" id="CHEBI:58017"/>
        <note>ligand shared between dimeric partners</note>
    </ligand>
</feature>
<feature type="binding site" evidence="1">
    <location>
        <position position="99"/>
    </location>
    <ligand>
        <name>5-phospho-alpha-D-ribose 1-diphosphate</name>
        <dbReference type="ChEBI" id="CHEBI:58017"/>
        <note>ligand shared between dimeric partners</note>
    </ligand>
</feature>
<feature type="binding site" description="in other chain" evidence="1">
    <location>
        <position position="100"/>
    </location>
    <ligand>
        <name>5-phospho-alpha-D-ribose 1-diphosphate</name>
        <dbReference type="ChEBI" id="CHEBI:58017"/>
        <note>ligand shared between dimeric partners</note>
    </ligand>
</feature>
<feature type="binding site" evidence="1">
    <location>
        <position position="103"/>
    </location>
    <ligand>
        <name>5-phospho-alpha-D-ribose 1-diphosphate</name>
        <dbReference type="ChEBI" id="CHEBI:58017"/>
        <note>ligand shared between dimeric partners</note>
    </ligand>
</feature>
<feature type="binding site" evidence="1">
    <location>
        <position position="105"/>
    </location>
    <ligand>
        <name>5-phospho-alpha-D-ribose 1-diphosphate</name>
        <dbReference type="ChEBI" id="CHEBI:58017"/>
        <note>ligand shared between dimeric partners</note>
    </ligand>
</feature>
<feature type="binding site" description="in other chain" evidence="1">
    <location>
        <begin position="124"/>
        <end position="132"/>
    </location>
    <ligand>
        <name>5-phospho-alpha-D-ribose 1-diphosphate</name>
        <dbReference type="ChEBI" id="CHEBI:58017"/>
        <note>ligand shared between dimeric partners</note>
    </ligand>
</feature>
<feature type="binding site" evidence="1">
    <location>
        <position position="128"/>
    </location>
    <ligand>
        <name>orotate</name>
        <dbReference type="ChEBI" id="CHEBI:30839"/>
    </ligand>
</feature>
<feature type="binding site" evidence="1">
    <location>
        <position position="156"/>
    </location>
    <ligand>
        <name>orotate</name>
        <dbReference type="ChEBI" id="CHEBI:30839"/>
    </ligand>
</feature>
<protein>
    <recommendedName>
        <fullName evidence="1">Orotate phosphoribosyltransferase</fullName>
        <shortName evidence="1">OPRT</shortName>
        <shortName evidence="1">OPRTase</shortName>
        <ecNumber evidence="1">2.4.2.10</ecNumber>
    </recommendedName>
</protein>
<proteinExistence type="inferred from homology"/>
<gene>
    <name evidence="1" type="primary">pyrE</name>
    <name type="ordered locus">PST_0466</name>
</gene>
<organism>
    <name type="scientific">Stutzerimonas stutzeri (strain A1501)</name>
    <name type="common">Pseudomonas stutzeri</name>
    <dbReference type="NCBI Taxonomy" id="379731"/>
    <lineage>
        <taxon>Bacteria</taxon>
        <taxon>Pseudomonadati</taxon>
        <taxon>Pseudomonadota</taxon>
        <taxon>Gammaproteobacteria</taxon>
        <taxon>Pseudomonadales</taxon>
        <taxon>Pseudomonadaceae</taxon>
        <taxon>Stutzerimonas</taxon>
    </lineage>
</organism>